<name>FISL_NEIMB</name>
<gene>
    <name type="ordered locus">NMB1420</name>
</gene>
<protein>
    <recommendedName>
        <fullName>Putative Fis-like DNA-binding protein</fullName>
    </recommendedName>
</protein>
<dbReference type="EMBL" id="AE002098">
    <property type="protein sequence ID" value="AAF41781.1"/>
    <property type="molecule type" value="Genomic_DNA"/>
</dbReference>
<dbReference type="PIR" id="F81085">
    <property type="entry name" value="F81085"/>
</dbReference>
<dbReference type="RefSeq" id="NP_274432.1">
    <property type="nucleotide sequence ID" value="NC_003112.2"/>
</dbReference>
<dbReference type="RefSeq" id="WP_002213092.1">
    <property type="nucleotide sequence ID" value="NC_003112.2"/>
</dbReference>
<dbReference type="SMR" id="P64131"/>
<dbReference type="FunCoup" id="P64131">
    <property type="interactions" value="162"/>
</dbReference>
<dbReference type="STRING" id="122586.NMB1420"/>
<dbReference type="PaxDb" id="122586-NMB1420"/>
<dbReference type="KEGG" id="nme:NMB1420"/>
<dbReference type="PATRIC" id="fig|122586.8.peg.1775"/>
<dbReference type="HOGENOM" id="CLU_158040_2_1_4"/>
<dbReference type="InParanoid" id="P64131"/>
<dbReference type="OrthoDB" id="9802388at2"/>
<dbReference type="Proteomes" id="UP000000425">
    <property type="component" value="Chromosome"/>
</dbReference>
<dbReference type="GO" id="GO:0043565">
    <property type="term" value="F:sequence-specific DNA binding"/>
    <property type="evidence" value="ECO:0000318"/>
    <property type="project" value="GO_Central"/>
</dbReference>
<dbReference type="GO" id="GO:0006355">
    <property type="term" value="P:regulation of DNA-templated transcription"/>
    <property type="evidence" value="ECO:0007669"/>
    <property type="project" value="InterPro"/>
</dbReference>
<dbReference type="Gene3D" id="1.10.10.60">
    <property type="entry name" value="Homeodomain-like"/>
    <property type="match status" value="1"/>
</dbReference>
<dbReference type="InterPro" id="IPR005412">
    <property type="entry name" value="Fis_DNA-bd"/>
</dbReference>
<dbReference type="InterPro" id="IPR009057">
    <property type="entry name" value="Homeodomain-like_sf"/>
</dbReference>
<dbReference type="InterPro" id="IPR002197">
    <property type="entry name" value="HTH_Fis"/>
</dbReference>
<dbReference type="InterPro" id="IPR050207">
    <property type="entry name" value="Trans_regulatory_Fis"/>
</dbReference>
<dbReference type="NCBIfam" id="NF002517">
    <property type="entry name" value="PRK01905.1"/>
    <property type="match status" value="1"/>
</dbReference>
<dbReference type="PANTHER" id="PTHR47918">
    <property type="entry name" value="DNA-BINDING PROTEIN FIS"/>
    <property type="match status" value="1"/>
</dbReference>
<dbReference type="PANTHER" id="PTHR47918:SF1">
    <property type="entry name" value="DNA-BINDING PROTEIN FIS"/>
    <property type="match status" value="1"/>
</dbReference>
<dbReference type="Pfam" id="PF02954">
    <property type="entry name" value="HTH_8"/>
    <property type="match status" value="1"/>
</dbReference>
<dbReference type="PIRSF" id="PIRSF002097">
    <property type="entry name" value="DNA-binding_Fis"/>
    <property type="match status" value="1"/>
</dbReference>
<dbReference type="PRINTS" id="PR01590">
    <property type="entry name" value="HTHFIS"/>
</dbReference>
<dbReference type="SUPFAM" id="SSF46689">
    <property type="entry name" value="Homeodomain-like"/>
    <property type="match status" value="1"/>
</dbReference>
<sequence length="79" mass="8937">MPHTLPDISQCIRQNLEQYFKDLNGTEPCGVYDMVLHQVEKPLLVCVMEQCGGNQSKASVMLGLNRNTLRKKLIQHGLL</sequence>
<proteinExistence type="inferred from homology"/>
<keyword id="KW-0238">DNA-binding</keyword>
<keyword id="KW-1185">Reference proteome</keyword>
<organism>
    <name type="scientific">Neisseria meningitidis serogroup B (strain ATCC BAA-335 / MC58)</name>
    <dbReference type="NCBI Taxonomy" id="122586"/>
    <lineage>
        <taxon>Bacteria</taxon>
        <taxon>Pseudomonadati</taxon>
        <taxon>Pseudomonadota</taxon>
        <taxon>Betaproteobacteria</taxon>
        <taxon>Neisseriales</taxon>
        <taxon>Neisseriaceae</taxon>
        <taxon>Neisseria</taxon>
    </lineage>
</organism>
<accession>P64131</accession>
<accession>Q9JR42</accession>
<evidence type="ECO:0000250" key="1"/>
<evidence type="ECO:0000305" key="2"/>
<comment type="similarity">
    <text evidence="2">Belongs to the transcriptional regulatory Fis family.</text>
</comment>
<reference key="1">
    <citation type="journal article" date="2000" name="Science">
        <title>Complete genome sequence of Neisseria meningitidis serogroup B strain MC58.</title>
        <authorList>
            <person name="Tettelin H."/>
            <person name="Saunders N.J."/>
            <person name="Heidelberg J.F."/>
            <person name="Jeffries A.C."/>
            <person name="Nelson K.E."/>
            <person name="Eisen J.A."/>
            <person name="Ketchum K.A."/>
            <person name="Hood D.W."/>
            <person name="Peden J.F."/>
            <person name="Dodson R.J."/>
            <person name="Nelson W.C."/>
            <person name="Gwinn M.L."/>
            <person name="DeBoy R.T."/>
            <person name="Peterson J.D."/>
            <person name="Hickey E.K."/>
            <person name="Haft D.H."/>
            <person name="Salzberg S.L."/>
            <person name="White O."/>
            <person name="Fleischmann R.D."/>
            <person name="Dougherty B.A."/>
            <person name="Mason T.M."/>
            <person name="Ciecko A."/>
            <person name="Parksey D.S."/>
            <person name="Blair E."/>
            <person name="Cittone H."/>
            <person name="Clark E.B."/>
            <person name="Cotton M.D."/>
            <person name="Utterback T.R."/>
            <person name="Khouri H.M."/>
            <person name="Qin H."/>
            <person name="Vamathevan J.J."/>
            <person name="Gill J."/>
            <person name="Scarlato V."/>
            <person name="Masignani V."/>
            <person name="Pizza M."/>
            <person name="Grandi G."/>
            <person name="Sun L."/>
            <person name="Smith H.O."/>
            <person name="Fraser C.M."/>
            <person name="Moxon E.R."/>
            <person name="Rappuoli R."/>
            <person name="Venter J.C."/>
        </authorList>
    </citation>
    <scope>NUCLEOTIDE SEQUENCE [LARGE SCALE GENOMIC DNA]</scope>
    <source>
        <strain>ATCC BAA-335 / MC58</strain>
    </source>
</reference>
<feature type="chain" id="PRO_0000203906" description="Putative Fis-like DNA-binding protein">
    <location>
        <begin position="1"/>
        <end position="79"/>
    </location>
</feature>
<feature type="DNA-binding region" description="H-T-H motif" evidence="1">
    <location>
        <begin position="55"/>
        <end position="74"/>
    </location>
</feature>